<keyword id="KW-0067">ATP-binding</keyword>
<keyword id="KW-0436">Ligase</keyword>
<keyword id="KW-0479">Metal-binding</keyword>
<keyword id="KW-0547">Nucleotide-binding</keyword>
<keyword id="KW-0671">Queuosine biosynthesis</keyword>
<keyword id="KW-0862">Zinc</keyword>
<sequence length="222" mass="24812">MNSTPKAVVIFSGGQDSTTCLFQAIQEFGVKNVEVVTFQYGQRHAIELEKAAWIAKDLGVKQTLIDTSVIKAITSNAMMEEREIKQEGNTPNTFVDGRNALFLLYTAIYAKGQGIRTIFTGVCETDFSGYPDCRDVFVKSMNVTLNLAMDYNFNIRTPLMYLTKKQTWALADKLGAFDYIRQHTHTCYLGVEGGCHTCPSCVLREKGLNEYLSEKTSGQKNV</sequence>
<comment type="function">
    <text evidence="1">Catalyzes the ATP-dependent conversion of 7-carboxy-7-deazaguanine (CDG) to 7-cyano-7-deazaguanine (preQ(0)).</text>
</comment>
<comment type="catalytic activity">
    <reaction evidence="1">
        <text>7-carboxy-7-deazaguanine + NH4(+) + ATP = 7-cyano-7-deazaguanine + ADP + phosphate + H2O + H(+)</text>
        <dbReference type="Rhea" id="RHEA:27982"/>
        <dbReference type="ChEBI" id="CHEBI:15377"/>
        <dbReference type="ChEBI" id="CHEBI:15378"/>
        <dbReference type="ChEBI" id="CHEBI:28938"/>
        <dbReference type="ChEBI" id="CHEBI:30616"/>
        <dbReference type="ChEBI" id="CHEBI:43474"/>
        <dbReference type="ChEBI" id="CHEBI:45075"/>
        <dbReference type="ChEBI" id="CHEBI:61036"/>
        <dbReference type="ChEBI" id="CHEBI:456216"/>
        <dbReference type="EC" id="6.3.4.20"/>
    </reaction>
</comment>
<comment type="cofactor">
    <cofactor evidence="1">
        <name>Zn(2+)</name>
        <dbReference type="ChEBI" id="CHEBI:29105"/>
    </cofactor>
    <text evidence="1">Binds 1 zinc ion per subunit.</text>
</comment>
<comment type="pathway">
    <text evidence="1">Purine metabolism; 7-cyano-7-deazaguanine biosynthesis.</text>
</comment>
<comment type="similarity">
    <text evidence="1">Belongs to the QueC family.</text>
</comment>
<protein>
    <recommendedName>
        <fullName evidence="1">7-cyano-7-deazaguanine synthase</fullName>
        <ecNumber evidence="1">6.3.4.20</ecNumber>
    </recommendedName>
    <alternativeName>
        <fullName evidence="1">7-cyano-7-carbaguanine synthase</fullName>
    </alternativeName>
    <alternativeName>
        <fullName evidence="1">PreQ(0) synthase</fullName>
    </alternativeName>
    <alternativeName>
        <fullName evidence="1">Queuosine biosynthesis protein QueC</fullName>
    </alternativeName>
</protein>
<evidence type="ECO:0000255" key="1">
    <source>
        <dbReference type="HAMAP-Rule" id="MF_01633"/>
    </source>
</evidence>
<dbReference type="EC" id="6.3.4.20" evidence="1"/>
<dbReference type="EMBL" id="CP000687">
    <property type="protein sequence ID" value="ABY69667.1"/>
    <property type="molecule type" value="Genomic_DNA"/>
</dbReference>
<dbReference type="RefSeq" id="WP_005619473.1">
    <property type="nucleotide sequence ID" value="NC_010278.1"/>
</dbReference>
<dbReference type="SMR" id="B0BQ32"/>
<dbReference type="KEGG" id="apj:APJL_1111"/>
<dbReference type="HOGENOM" id="CLU_081854_0_0_6"/>
<dbReference type="UniPathway" id="UPA00391"/>
<dbReference type="Proteomes" id="UP000008547">
    <property type="component" value="Chromosome"/>
</dbReference>
<dbReference type="GO" id="GO:0005524">
    <property type="term" value="F:ATP binding"/>
    <property type="evidence" value="ECO:0007669"/>
    <property type="project" value="UniProtKB-UniRule"/>
</dbReference>
<dbReference type="GO" id="GO:0016879">
    <property type="term" value="F:ligase activity, forming carbon-nitrogen bonds"/>
    <property type="evidence" value="ECO:0007669"/>
    <property type="project" value="UniProtKB-UniRule"/>
</dbReference>
<dbReference type="GO" id="GO:0008270">
    <property type="term" value="F:zinc ion binding"/>
    <property type="evidence" value="ECO:0007669"/>
    <property type="project" value="UniProtKB-UniRule"/>
</dbReference>
<dbReference type="GO" id="GO:0008616">
    <property type="term" value="P:queuosine biosynthetic process"/>
    <property type="evidence" value="ECO:0007669"/>
    <property type="project" value="UniProtKB-UniRule"/>
</dbReference>
<dbReference type="CDD" id="cd01995">
    <property type="entry name" value="QueC-like"/>
    <property type="match status" value="1"/>
</dbReference>
<dbReference type="Gene3D" id="3.40.50.620">
    <property type="entry name" value="HUPs"/>
    <property type="match status" value="1"/>
</dbReference>
<dbReference type="HAMAP" id="MF_01633">
    <property type="entry name" value="QueC"/>
    <property type="match status" value="1"/>
</dbReference>
<dbReference type="InterPro" id="IPR018317">
    <property type="entry name" value="QueC"/>
</dbReference>
<dbReference type="InterPro" id="IPR014729">
    <property type="entry name" value="Rossmann-like_a/b/a_fold"/>
</dbReference>
<dbReference type="NCBIfam" id="TIGR00364">
    <property type="entry name" value="7-cyano-7-deazaguanine synthase QueC"/>
    <property type="match status" value="1"/>
</dbReference>
<dbReference type="PANTHER" id="PTHR42914">
    <property type="entry name" value="7-CYANO-7-DEAZAGUANINE SYNTHASE"/>
    <property type="match status" value="1"/>
</dbReference>
<dbReference type="PANTHER" id="PTHR42914:SF1">
    <property type="entry name" value="7-CYANO-7-DEAZAGUANINE SYNTHASE"/>
    <property type="match status" value="1"/>
</dbReference>
<dbReference type="Pfam" id="PF06508">
    <property type="entry name" value="QueC"/>
    <property type="match status" value="1"/>
</dbReference>
<dbReference type="PIRSF" id="PIRSF006293">
    <property type="entry name" value="ExsB"/>
    <property type="match status" value="1"/>
</dbReference>
<dbReference type="SUPFAM" id="SSF52402">
    <property type="entry name" value="Adenine nucleotide alpha hydrolases-like"/>
    <property type="match status" value="1"/>
</dbReference>
<organism>
    <name type="scientific">Actinobacillus pleuropneumoniae serotype 3 (strain JL03)</name>
    <dbReference type="NCBI Taxonomy" id="434271"/>
    <lineage>
        <taxon>Bacteria</taxon>
        <taxon>Pseudomonadati</taxon>
        <taxon>Pseudomonadota</taxon>
        <taxon>Gammaproteobacteria</taxon>
        <taxon>Pasteurellales</taxon>
        <taxon>Pasteurellaceae</taxon>
        <taxon>Actinobacillus</taxon>
    </lineage>
</organism>
<proteinExistence type="inferred from homology"/>
<accession>B0BQ32</accession>
<name>QUEC_ACTPJ</name>
<feature type="chain" id="PRO_0000336884" description="7-cyano-7-deazaguanine synthase">
    <location>
        <begin position="1"/>
        <end position="222"/>
    </location>
</feature>
<feature type="binding site" evidence="1">
    <location>
        <begin position="11"/>
        <end position="21"/>
    </location>
    <ligand>
        <name>ATP</name>
        <dbReference type="ChEBI" id="CHEBI:30616"/>
    </ligand>
</feature>
<feature type="binding site" evidence="1">
    <location>
        <position position="187"/>
    </location>
    <ligand>
        <name>Zn(2+)</name>
        <dbReference type="ChEBI" id="CHEBI:29105"/>
    </ligand>
</feature>
<feature type="binding site" evidence="1">
    <location>
        <position position="195"/>
    </location>
    <ligand>
        <name>Zn(2+)</name>
        <dbReference type="ChEBI" id="CHEBI:29105"/>
    </ligand>
</feature>
<feature type="binding site" evidence="1">
    <location>
        <position position="198"/>
    </location>
    <ligand>
        <name>Zn(2+)</name>
        <dbReference type="ChEBI" id="CHEBI:29105"/>
    </ligand>
</feature>
<feature type="binding site" evidence="1">
    <location>
        <position position="201"/>
    </location>
    <ligand>
        <name>Zn(2+)</name>
        <dbReference type="ChEBI" id="CHEBI:29105"/>
    </ligand>
</feature>
<gene>
    <name evidence="1" type="primary">queC</name>
    <name type="ordered locus">APJL_1111</name>
</gene>
<reference key="1">
    <citation type="journal article" date="2008" name="PLoS ONE">
        <title>Genome biology of Actinobacillus pleuropneumoniae JL03, an isolate of serotype 3 prevalent in China.</title>
        <authorList>
            <person name="Xu Z."/>
            <person name="Zhou Y."/>
            <person name="Li L."/>
            <person name="Zhou R."/>
            <person name="Xiao S."/>
            <person name="Wan Y."/>
            <person name="Zhang S."/>
            <person name="Wang K."/>
            <person name="Li W."/>
            <person name="Li L."/>
            <person name="Jin H."/>
            <person name="Kang M."/>
            <person name="Dalai B."/>
            <person name="Li T."/>
            <person name="Liu L."/>
            <person name="Cheng Y."/>
            <person name="Zhang L."/>
            <person name="Xu T."/>
            <person name="Zheng H."/>
            <person name="Pu S."/>
            <person name="Wang B."/>
            <person name="Gu W."/>
            <person name="Zhang X.L."/>
            <person name="Zhu G.-F."/>
            <person name="Wang S."/>
            <person name="Zhao G.-P."/>
            <person name="Chen H."/>
        </authorList>
    </citation>
    <scope>NUCLEOTIDE SEQUENCE [LARGE SCALE GENOMIC DNA]</scope>
    <source>
        <strain>JL03</strain>
    </source>
</reference>